<feature type="chain" id="PRO_0000223725" description="Acetyl-coenzyme A carboxylase carboxyl transferase subunit alpha">
    <location>
        <begin position="1"/>
        <end position="326"/>
    </location>
</feature>
<feature type="domain" description="CoA carboxyltransferase C-terminal" evidence="2">
    <location>
        <begin position="44"/>
        <end position="298"/>
    </location>
</feature>
<gene>
    <name evidence="1" type="primary">accA</name>
    <name type="ordered locus">alr5285</name>
</gene>
<keyword id="KW-0067">ATP-binding</keyword>
<keyword id="KW-0963">Cytoplasm</keyword>
<keyword id="KW-0275">Fatty acid biosynthesis</keyword>
<keyword id="KW-0276">Fatty acid metabolism</keyword>
<keyword id="KW-0444">Lipid biosynthesis</keyword>
<keyword id="KW-0443">Lipid metabolism</keyword>
<keyword id="KW-0547">Nucleotide-binding</keyword>
<keyword id="KW-1185">Reference proteome</keyword>
<keyword id="KW-0808">Transferase</keyword>
<organism>
    <name type="scientific">Nostoc sp. (strain PCC 7120 / SAG 25.82 / UTEX 2576)</name>
    <dbReference type="NCBI Taxonomy" id="103690"/>
    <lineage>
        <taxon>Bacteria</taxon>
        <taxon>Bacillati</taxon>
        <taxon>Cyanobacteriota</taxon>
        <taxon>Cyanophyceae</taxon>
        <taxon>Nostocales</taxon>
        <taxon>Nostocaceae</taxon>
        <taxon>Nostoc</taxon>
    </lineage>
</organism>
<name>ACCA_NOSS1</name>
<evidence type="ECO:0000255" key="1">
    <source>
        <dbReference type="HAMAP-Rule" id="MF_00823"/>
    </source>
</evidence>
<evidence type="ECO:0000255" key="2">
    <source>
        <dbReference type="PROSITE-ProRule" id="PRU01137"/>
    </source>
</evidence>
<comment type="function">
    <text evidence="1">Component of the acetyl coenzyme A carboxylase (ACC) complex. First, biotin carboxylase catalyzes the carboxylation of biotin on its carrier protein (BCCP) and then the CO(2) group is transferred by the carboxyltransferase to acetyl-CoA to form malonyl-CoA.</text>
</comment>
<comment type="catalytic activity">
    <reaction evidence="1">
        <text>N(6)-carboxybiotinyl-L-lysyl-[protein] + acetyl-CoA = N(6)-biotinyl-L-lysyl-[protein] + malonyl-CoA</text>
        <dbReference type="Rhea" id="RHEA:54728"/>
        <dbReference type="Rhea" id="RHEA-COMP:10505"/>
        <dbReference type="Rhea" id="RHEA-COMP:10506"/>
        <dbReference type="ChEBI" id="CHEBI:57288"/>
        <dbReference type="ChEBI" id="CHEBI:57384"/>
        <dbReference type="ChEBI" id="CHEBI:83144"/>
        <dbReference type="ChEBI" id="CHEBI:83145"/>
        <dbReference type="EC" id="2.1.3.15"/>
    </reaction>
</comment>
<comment type="pathway">
    <text evidence="1">Lipid metabolism; malonyl-CoA biosynthesis; malonyl-CoA from acetyl-CoA: step 1/1.</text>
</comment>
<comment type="subunit">
    <text evidence="1">Acetyl-CoA carboxylase is a heterohexamer composed of biotin carboxyl carrier protein (AccB), biotin carboxylase (AccC) and two subunits each of ACCase subunit alpha (AccA) and ACCase subunit beta (AccD).</text>
</comment>
<comment type="subcellular location">
    <subcellularLocation>
        <location evidence="1">Cytoplasm</location>
    </subcellularLocation>
</comment>
<comment type="similarity">
    <text evidence="1">Belongs to the AccA family.</text>
</comment>
<dbReference type="EC" id="2.1.3.15" evidence="1"/>
<dbReference type="EMBL" id="BA000019">
    <property type="protein sequence ID" value="BAB76984.1"/>
    <property type="molecule type" value="Genomic_DNA"/>
</dbReference>
<dbReference type="PIR" id="AE2466">
    <property type="entry name" value="AE2466"/>
</dbReference>
<dbReference type="RefSeq" id="WP_010999409.1">
    <property type="nucleotide sequence ID" value="NZ_RSCN01000005.1"/>
</dbReference>
<dbReference type="SMR" id="Q8YLL3"/>
<dbReference type="STRING" id="103690.gene:10497345"/>
<dbReference type="KEGG" id="ana:alr5285"/>
<dbReference type="eggNOG" id="COG0825">
    <property type="taxonomic scope" value="Bacteria"/>
</dbReference>
<dbReference type="OrthoDB" id="9808023at2"/>
<dbReference type="UniPathway" id="UPA00655">
    <property type="reaction ID" value="UER00711"/>
</dbReference>
<dbReference type="Proteomes" id="UP000002483">
    <property type="component" value="Chromosome"/>
</dbReference>
<dbReference type="GO" id="GO:0009317">
    <property type="term" value="C:acetyl-CoA carboxylase complex"/>
    <property type="evidence" value="ECO:0007669"/>
    <property type="project" value="InterPro"/>
</dbReference>
<dbReference type="GO" id="GO:0003989">
    <property type="term" value="F:acetyl-CoA carboxylase activity"/>
    <property type="evidence" value="ECO:0007669"/>
    <property type="project" value="InterPro"/>
</dbReference>
<dbReference type="GO" id="GO:0005524">
    <property type="term" value="F:ATP binding"/>
    <property type="evidence" value="ECO:0007669"/>
    <property type="project" value="UniProtKB-KW"/>
</dbReference>
<dbReference type="GO" id="GO:0016743">
    <property type="term" value="F:carboxyl- or carbamoyltransferase activity"/>
    <property type="evidence" value="ECO:0007669"/>
    <property type="project" value="UniProtKB-UniRule"/>
</dbReference>
<dbReference type="GO" id="GO:0006633">
    <property type="term" value="P:fatty acid biosynthetic process"/>
    <property type="evidence" value="ECO:0007669"/>
    <property type="project" value="UniProtKB-KW"/>
</dbReference>
<dbReference type="GO" id="GO:2001295">
    <property type="term" value="P:malonyl-CoA biosynthetic process"/>
    <property type="evidence" value="ECO:0007669"/>
    <property type="project" value="UniProtKB-UniRule"/>
</dbReference>
<dbReference type="Gene3D" id="3.90.226.10">
    <property type="entry name" value="2-enoyl-CoA Hydratase, Chain A, domain 1"/>
    <property type="match status" value="1"/>
</dbReference>
<dbReference type="HAMAP" id="MF_00823">
    <property type="entry name" value="AcetylCoA_CT_alpha"/>
    <property type="match status" value="1"/>
</dbReference>
<dbReference type="InterPro" id="IPR001095">
    <property type="entry name" value="Acetyl_CoA_COase_a_su"/>
</dbReference>
<dbReference type="InterPro" id="IPR029045">
    <property type="entry name" value="ClpP/crotonase-like_dom_sf"/>
</dbReference>
<dbReference type="InterPro" id="IPR011763">
    <property type="entry name" value="COA_CT_C"/>
</dbReference>
<dbReference type="NCBIfam" id="TIGR00513">
    <property type="entry name" value="accA"/>
    <property type="match status" value="1"/>
</dbReference>
<dbReference type="NCBIfam" id="NF041504">
    <property type="entry name" value="AccA_sub"/>
    <property type="match status" value="1"/>
</dbReference>
<dbReference type="NCBIfam" id="NF004344">
    <property type="entry name" value="PRK05724.1"/>
    <property type="match status" value="1"/>
</dbReference>
<dbReference type="PANTHER" id="PTHR42853">
    <property type="entry name" value="ACETYL-COENZYME A CARBOXYLASE CARBOXYL TRANSFERASE SUBUNIT ALPHA"/>
    <property type="match status" value="1"/>
</dbReference>
<dbReference type="PANTHER" id="PTHR42853:SF3">
    <property type="entry name" value="ACETYL-COENZYME A CARBOXYLASE CARBOXYL TRANSFERASE SUBUNIT ALPHA, CHLOROPLASTIC"/>
    <property type="match status" value="1"/>
</dbReference>
<dbReference type="Pfam" id="PF03255">
    <property type="entry name" value="ACCA"/>
    <property type="match status" value="1"/>
</dbReference>
<dbReference type="PRINTS" id="PR01069">
    <property type="entry name" value="ACCCTRFRASEA"/>
</dbReference>
<dbReference type="SUPFAM" id="SSF52096">
    <property type="entry name" value="ClpP/crotonase"/>
    <property type="match status" value="1"/>
</dbReference>
<dbReference type="PROSITE" id="PS50989">
    <property type="entry name" value="COA_CT_CTER"/>
    <property type="match status" value="1"/>
</dbReference>
<reference key="1">
    <citation type="journal article" date="2001" name="DNA Res.">
        <title>Complete genomic sequence of the filamentous nitrogen-fixing cyanobacterium Anabaena sp. strain PCC 7120.</title>
        <authorList>
            <person name="Kaneko T."/>
            <person name="Nakamura Y."/>
            <person name="Wolk C.P."/>
            <person name="Kuritz T."/>
            <person name="Sasamoto S."/>
            <person name="Watanabe A."/>
            <person name="Iriguchi M."/>
            <person name="Ishikawa A."/>
            <person name="Kawashima K."/>
            <person name="Kimura T."/>
            <person name="Kishida Y."/>
            <person name="Kohara M."/>
            <person name="Matsumoto M."/>
            <person name="Matsuno A."/>
            <person name="Muraki A."/>
            <person name="Nakazaki N."/>
            <person name="Shimpo S."/>
            <person name="Sugimoto M."/>
            <person name="Takazawa M."/>
            <person name="Yamada M."/>
            <person name="Yasuda M."/>
            <person name="Tabata S."/>
        </authorList>
    </citation>
    <scope>NUCLEOTIDE SEQUENCE [LARGE SCALE GENOMIC DNA]</scope>
    <source>
        <strain>PCC 7120 / SAG 25.82 / UTEX 2576</strain>
    </source>
</reference>
<sequence length="326" mass="35681">MATTERKPLLLDFEKPLAELANRIDQIRQLAEENGVDVSGEIRKLETRAMQLREEIFSTLSPSQRLQVARHPRRPSTLDYIQAISDEWMELHGDRCGGDDPALIGGVARLGGKPVVILGHQKGRDTKDNIARNFGMATPGGYRKAMRLMEHANKFSMPILTFIDTPGALPTVVAERQGAGEAIAYNLREMFSLDVPIICTVIGEGGSGGALGIGVGDRLLMFEHSVYTVATPEACAAILWKDASKSPQAAVALKIVSHDLKNLGIIDQILPEPTGGAHSDPLTAATTLKQALLDNLDELDRLTSQERRQLRYDKFRKIGVFTEVAH</sequence>
<proteinExistence type="inferred from homology"/>
<protein>
    <recommendedName>
        <fullName evidence="1">Acetyl-coenzyme A carboxylase carboxyl transferase subunit alpha</fullName>
        <shortName evidence="1">ACCase subunit alpha</shortName>
        <shortName evidence="1">Acetyl-CoA carboxylase carboxyltransferase subunit alpha</shortName>
        <ecNumber evidence="1">2.1.3.15</ecNumber>
    </recommendedName>
</protein>
<accession>Q8YLL3</accession>